<feature type="chain" id="PRO_0000364334" description="Eukaryotic translation initiation factor 3 subunit F">
    <location>
        <begin position="1"/>
        <end position="342"/>
    </location>
</feature>
<feature type="domain" description="MPN" evidence="2">
    <location>
        <begin position="30"/>
        <end position="166"/>
    </location>
</feature>
<feature type="region of interest" description="Disordered" evidence="3">
    <location>
        <begin position="310"/>
        <end position="342"/>
    </location>
</feature>
<feature type="compositionally biased region" description="Basic and acidic residues" evidence="3">
    <location>
        <begin position="317"/>
        <end position="331"/>
    </location>
</feature>
<dbReference type="EMBL" id="CH445331">
    <property type="protein sequence ID" value="EAT87249.1"/>
    <property type="molecule type" value="Genomic_DNA"/>
</dbReference>
<dbReference type="RefSeq" id="XP_001795271.1">
    <property type="nucleotide sequence ID" value="XM_001795219.1"/>
</dbReference>
<dbReference type="SMR" id="Q0UTQ6"/>
<dbReference type="STRING" id="321614.Q0UTQ6"/>
<dbReference type="EnsemblFungi" id="SNOT_04858">
    <property type="protein sequence ID" value="SNOT_04858"/>
    <property type="gene ID" value="SNOG_04858"/>
</dbReference>
<dbReference type="GeneID" id="5972146"/>
<dbReference type="KEGG" id="pno:SNOG_04858"/>
<dbReference type="VEuPathDB" id="FungiDB:JI435_048580"/>
<dbReference type="eggNOG" id="KOG2975">
    <property type="taxonomic scope" value="Eukaryota"/>
</dbReference>
<dbReference type="HOGENOM" id="CLU_027018_0_0_1"/>
<dbReference type="InParanoid" id="Q0UTQ6"/>
<dbReference type="OMA" id="EYFVHFH"/>
<dbReference type="OrthoDB" id="25498at2759"/>
<dbReference type="Proteomes" id="UP000001055">
    <property type="component" value="Unassembled WGS sequence"/>
</dbReference>
<dbReference type="GO" id="GO:0016282">
    <property type="term" value="C:eukaryotic 43S preinitiation complex"/>
    <property type="evidence" value="ECO:0007669"/>
    <property type="project" value="UniProtKB-UniRule"/>
</dbReference>
<dbReference type="GO" id="GO:0033290">
    <property type="term" value="C:eukaryotic 48S preinitiation complex"/>
    <property type="evidence" value="ECO:0007669"/>
    <property type="project" value="UniProtKB-UniRule"/>
</dbReference>
<dbReference type="GO" id="GO:0071540">
    <property type="term" value="C:eukaryotic translation initiation factor 3 complex, eIF3e"/>
    <property type="evidence" value="ECO:0007669"/>
    <property type="project" value="EnsemblFungi"/>
</dbReference>
<dbReference type="GO" id="GO:0071541">
    <property type="term" value="C:eukaryotic translation initiation factor 3 complex, eIF3m"/>
    <property type="evidence" value="ECO:0000318"/>
    <property type="project" value="GO_Central"/>
</dbReference>
<dbReference type="GO" id="GO:0008237">
    <property type="term" value="F:metallopeptidase activity"/>
    <property type="evidence" value="ECO:0007669"/>
    <property type="project" value="InterPro"/>
</dbReference>
<dbReference type="GO" id="GO:0003743">
    <property type="term" value="F:translation initiation factor activity"/>
    <property type="evidence" value="ECO:0007669"/>
    <property type="project" value="UniProtKB-UniRule"/>
</dbReference>
<dbReference type="GO" id="GO:0031369">
    <property type="term" value="F:translation initiation factor binding"/>
    <property type="evidence" value="ECO:0000318"/>
    <property type="project" value="GO_Central"/>
</dbReference>
<dbReference type="GO" id="GO:0001732">
    <property type="term" value="P:formation of cytoplasmic translation initiation complex"/>
    <property type="evidence" value="ECO:0007669"/>
    <property type="project" value="UniProtKB-UniRule"/>
</dbReference>
<dbReference type="GO" id="GO:0006413">
    <property type="term" value="P:translational initiation"/>
    <property type="evidence" value="ECO:0000318"/>
    <property type="project" value="GO_Central"/>
</dbReference>
<dbReference type="CDD" id="cd08064">
    <property type="entry name" value="MPN_eIF3f"/>
    <property type="match status" value="1"/>
</dbReference>
<dbReference type="FunFam" id="3.40.140.10:FF:000019">
    <property type="entry name" value="Eukaryotic translation initiation factor 3 subunit F"/>
    <property type="match status" value="1"/>
</dbReference>
<dbReference type="Gene3D" id="3.40.140.10">
    <property type="entry name" value="Cytidine Deaminase, domain 2"/>
    <property type="match status" value="1"/>
</dbReference>
<dbReference type="HAMAP" id="MF_03005">
    <property type="entry name" value="eIF3f"/>
    <property type="match status" value="1"/>
</dbReference>
<dbReference type="InterPro" id="IPR027531">
    <property type="entry name" value="eIF3f"/>
</dbReference>
<dbReference type="InterPro" id="IPR024969">
    <property type="entry name" value="EIF3F/CSN6-like_C"/>
</dbReference>
<dbReference type="InterPro" id="IPR000555">
    <property type="entry name" value="JAMM/MPN+_dom"/>
</dbReference>
<dbReference type="InterPro" id="IPR037518">
    <property type="entry name" value="MPN"/>
</dbReference>
<dbReference type="PANTHER" id="PTHR10540:SF6">
    <property type="entry name" value="EUKARYOTIC TRANSLATION INITIATION FACTOR 3 SUBUNIT F"/>
    <property type="match status" value="1"/>
</dbReference>
<dbReference type="PANTHER" id="PTHR10540">
    <property type="entry name" value="EUKARYOTIC TRANSLATION INITIATION FACTOR 3 SUBUNIT F-RELATED"/>
    <property type="match status" value="1"/>
</dbReference>
<dbReference type="Pfam" id="PF01398">
    <property type="entry name" value="JAB"/>
    <property type="match status" value="1"/>
</dbReference>
<dbReference type="Pfam" id="PF13012">
    <property type="entry name" value="MitMem_reg"/>
    <property type="match status" value="1"/>
</dbReference>
<dbReference type="SMART" id="SM00232">
    <property type="entry name" value="JAB_MPN"/>
    <property type="match status" value="1"/>
</dbReference>
<dbReference type="PROSITE" id="PS50249">
    <property type="entry name" value="MPN"/>
    <property type="match status" value="1"/>
</dbReference>
<organism>
    <name type="scientific">Phaeosphaeria nodorum (strain SN15 / ATCC MYA-4574 / FGSC 10173)</name>
    <name type="common">Glume blotch fungus</name>
    <name type="synonym">Parastagonospora nodorum</name>
    <dbReference type="NCBI Taxonomy" id="321614"/>
    <lineage>
        <taxon>Eukaryota</taxon>
        <taxon>Fungi</taxon>
        <taxon>Dikarya</taxon>
        <taxon>Ascomycota</taxon>
        <taxon>Pezizomycotina</taxon>
        <taxon>Dothideomycetes</taxon>
        <taxon>Pleosporomycetidae</taxon>
        <taxon>Pleosporales</taxon>
        <taxon>Pleosporineae</taxon>
        <taxon>Phaeosphaeriaceae</taxon>
        <taxon>Parastagonospora</taxon>
    </lineage>
</organism>
<sequence>MSERDSFLHLARPLGPAPVGAQPSTAPLNVAIQPQAVFSILDHSLRRPADQERVIGTLLGTRSEDGTEIEIRNCYAVPHTETAEQVEVDMDYQKQMLALHLRANPREVLVGWYATSSDLNTFSALIQNFYSQQGDGTWPHPAVHLTVSTVPGQDIESRTYISAPIGVTAERAADSCLFIPVPHEIKYGEAEKSGLELISSAKDREDRSQEIMTDLDSLERAVQHVLDMLERVSNYVNNVLDEEAEPSSALGQFLMNALSLAPKVDPADIERDFNNHIQDVLVVSYLANTIRTQIDLSNRLATAALTMGGTDALAGDGQKDGGDRKQGGDRRNKGRQQRTQEA</sequence>
<accession>Q0UTQ6</accession>
<gene>
    <name type="ORF">SNOG_04858</name>
</gene>
<reference key="1">
    <citation type="journal article" date="2007" name="Plant Cell">
        <title>Dothideomycete-plant interactions illuminated by genome sequencing and EST analysis of the wheat pathogen Stagonospora nodorum.</title>
        <authorList>
            <person name="Hane J.K."/>
            <person name="Lowe R.G.T."/>
            <person name="Solomon P.S."/>
            <person name="Tan K.-C."/>
            <person name="Schoch C.L."/>
            <person name="Spatafora J.W."/>
            <person name="Crous P.W."/>
            <person name="Kodira C.D."/>
            <person name="Birren B.W."/>
            <person name="Galagan J.E."/>
            <person name="Torriani S.F.F."/>
            <person name="McDonald B.A."/>
            <person name="Oliver R.P."/>
        </authorList>
    </citation>
    <scope>NUCLEOTIDE SEQUENCE [LARGE SCALE GENOMIC DNA]</scope>
    <source>
        <strain>SN15 / ATCC MYA-4574 / FGSC 10173</strain>
    </source>
</reference>
<name>EIF3F_PHANO</name>
<keyword id="KW-0963">Cytoplasm</keyword>
<keyword id="KW-0396">Initiation factor</keyword>
<keyword id="KW-0648">Protein biosynthesis</keyword>
<evidence type="ECO:0000255" key="1">
    <source>
        <dbReference type="HAMAP-Rule" id="MF_03005"/>
    </source>
</evidence>
<evidence type="ECO:0000255" key="2">
    <source>
        <dbReference type="PROSITE-ProRule" id="PRU01182"/>
    </source>
</evidence>
<evidence type="ECO:0000256" key="3">
    <source>
        <dbReference type="SAM" id="MobiDB-lite"/>
    </source>
</evidence>
<comment type="function">
    <text evidence="1">Component of the eukaryotic translation initiation factor 3 (eIF-3) complex, which is involved in protein synthesis of a specialized repertoire of mRNAs and, together with other initiation factors, stimulates binding of mRNA and methionyl-tRNAi to the 40S ribosome. The eIF-3 complex specifically targets and initiates translation of a subset of mRNAs involved in cell proliferation.</text>
</comment>
<comment type="subunit">
    <text evidence="1">Component of the eukaryotic translation initiation factor 3 (eIF-3) complex.</text>
</comment>
<comment type="subcellular location">
    <subcellularLocation>
        <location evidence="1">Cytoplasm</location>
    </subcellularLocation>
</comment>
<comment type="similarity">
    <text evidence="1">Belongs to the eIF-3 subunit F family.</text>
</comment>
<proteinExistence type="inferred from homology"/>
<protein>
    <recommendedName>
        <fullName evidence="1">Eukaryotic translation initiation factor 3 subunit F</fullName>
        <shortName evidence="1">eIF3f</shortName>
    </recommendedName>
</protein>